<gene>
    <name evidence="1" type="primary">pnp</name>
    <name type="ordered locus">lpg2768</name>
</gene>
<accession>Q5ZRV8</accession>
<keyword id="KW-0963">Cytoplasm</keyword>
<keyword id="KW-0460">Magnesium</keyword>
<keyword id="KW-0479">Metal-binding</keyword>
<keyword id="KW-0548">Nucleotidyltransferase</keyword>
<keyword id="KW-1185">Reference proteome</keyword>
<keyword id="KW-0694">RNA-binding</keyword>
<keyword id="KW-0808">Transferase</keyword>
<organism>
    <name type="scientific">Legionella pneumophila subsp. pneumophila (strain Philadelphia 1 / ATCC 33152 / DSM 7513)</name>
    <dbReference type="NCBI Taxonomy" id="272624"/>
    <lineage>
        <taxon>Bacteria</taxon>
        <taxon>Pseudomonadati</taxon>
        <taxon>Pseudomonadota</taxon>
        <taxon>Gammaproteobacteria</taxon>
        <taxon>Legionellales</taxon>
        <taxon>Legionellaceae</taxon>
        <taxon>Legionella</taxon>
    </lineage>
</organism>
<name>PNP_LEGPH</name>
<evidence type="ECO:0000255" key="1">
    <source>
        <dbReference type="HAMAP-Rule" id="MF_01595"/>
    </source>
</evidence>
<protein>
    <recommendedName>
        <fullName evidence="1">Polyribonucleotide nucleotidyltransferase</fullName>
        <ecNumber evidence="1">2.7.7.8</ecNumber>
    </recommendedName>
    <alternativeName>
        <fullName evidence="1">Polynucleotide phosphorylase</fullName>
        <shortName evidence="1">PNPase</shortName>
    </alternativeName>
</protein>
<dbReference type="EC" id="2.7.7.8" evidence="1"/>
<dbReference type="EMBL" id="AE017354">
    <property type="protein sequence ID" value="AAU28819.1"/>
    <property type="molecule type" value="Genomic_DNA"/>
</dbReference>
<dbReference type="RefSeq" id="WP_010948458.1">
    <property type="nucleotide sequence ID" value="NC_002942.5"/>
</dbReference>
<dbReference type="RefSeq" id="YP_096766.1">
    <property type="nucleotide sequence ID" value="NC_002942.5"/>
</dbReference>
<dbReference type="SMR" id="Q5ZRV8"/>
<dbReference type="STRING" id="272624.lpg2768"/>
<dbReference type="PaxDb" id="272624-lpg2768"/>
<dbReference type="GeneID" id="57036766"/>
<dbReference type="KEGG" id="lpn:lpg2768"/>
<dbReference type="PATRIC" id="fig|272624.6.peg.2950"/>
<dbReference type="eggNOG" id="COG1185">
    <property type="taxonomic scope" value="Bacteria"/>
</dbReference>
<dbReference type="HOGENOM" id="CLU_004217_2_2_6"/>
<dbReference type="OrthoDB" id="9804305at2"/>
<dbReference type="Proteomes" id="UP000000609">
    <property type="component" value="Chromosome"/>
</dbReference>
<dbReference type="GO" id="GO:0005829">
    <property type="term" value="C:cytosol"/>
    <property type="evidence" value="ECO:0007669"/>
    <property type="project" value="TreeGrafter"/>
</dbReference>
<dbReference type="GO" id="GO:0000175">
    <property type="term" value="F:3'-5'-RNA exonuclease activity"/>
    <property type="evidence" value="ECO:0007669"/>
    <property type="project" value="TreeGrafter"/>
</dbReference>
<dbReference type="GO" id="GO:0000287">
    <property type="term" value="F:magnesium ion binding"/>
    <property type="evidence" value="ECO:0007669"/>
    <property type="project" value="UniProtKB-UniRule"/>
</dbReference>
<dbReference type="GO" id="GO:0004654">
    <property type="term" value="F:polyribonucleotide nucleotidyltransferase activity"/>
    <property type="evidence" value="ECO:0007669"/>
    <property type="project" value="UniProtKB-UniRule"/>
</dbReference>
<dbReference type="GO" id="GO:0003723">
    <property type="term" value="F:RNA binding"/>
    <property type="evidence" value="ECO:0007669"/>
    <property type="project" value="UniProtKB-UniRule"/>
</dbReference>
<dbReference type="GO" id="GO:0006402">
    <property type="term" value="P:mRNA catabolic process"/>
    <property type="evidence" value="ECO:0007669"/>
    <property type="project" value="UniProtKB-UniRule"/>
</dbReference>
<dbReference type="GO" id="GO:0006396">
    <property type="term" value="P:RNA processing"/>
    <property type="evidence" value="ECO:0007669"/>
    <property type="project" value="InterPro"/>
</dbReference>
<dbReference type="CDD" id="cd02393">
    <property type="entry name" value="KH-I_PNPase"/>
    <property type="match status" value="1"/>
</dbReference>
<dbReference type="CDD" id="cd11363">
    <property type="entry name" value="RNase_PH_PNPase_1"/>
    <property type="match status" value="1"/>
</dbReference>
<dbReference type="CDD" id="cd11364">
    <property type="entry name" value="RNase_PH_PNPase_2"/>
    <property type="match status" value="1"/>
</dbReference>
<dbReference type="CDD" id="cd04472">
    <property type="entry name" value="S1_PNPase"/>
    <property type="match status" value="1"/>
</dbReference>
<dbReference type="FunFam" id="3.30.1370.10:FF:000001">
    <property type="entry name" value="Polyribonucleotide nucleotidyltransferase"/>
    <property type="match status" value="1"/>
</dbReference>
<dbReference type="FunFam" id="3.30.230.70:FF:000001">
    <property type="entry name" value="Polyribonucleotide nucleotidyltransferase"/>
    <property type="match status" value="1"/>
</dbReference>
<dbReference type="FunFam" id="3.30.230.70:FF:000002">
    <property type="entry name" value="Polyribonucleotide nucleotidyltransferase"/>
    <property type="match status" value="1"/>
</dbReference>
<dbReference type="FunFam" id="2.40.50.140:FF:000189">
    <property type="entry name" value="Polyribonucleotide nucleotidyltransferase, putative"/>
    <property type="match status" value="1"/>
</dbReference>
<dbReference type="Gene3D" id="3.30.230.70">
    <property type="entry name" value="GHMP Kinase, N-terminal domain"/>
    <property type="match status" value="2"/>
</dbReference>
<dbReference type="Gene3D" id="3.30.1370.10">
    <property type="entry name" value="K Homology domain, type 1"/>
    <property type="match status" value="1"/>
</dbReference>
<dbReference type="Gene3D" id="2.40.50.140">
    <property type="entry name" value="Nucleic acid-binding proteins"/>
    <property type="match status" value="1"/>
</dbReference>
<dbReference type="HAMAP" id="MF_01595">
    <property type="entry name" value="PNPase"/>
    <property type="match status" value="1"/>
</dbReference>
<dbReference type="InterPro" id="IPR001247">
    <property type="entry name" value="ExoRNase_PH_dom1"/>
</dbReference>
<dbReference type="InterPro" id="IPR015847">
    <property type="entry name" value="ExoRNase_PH_dom2"/>
</dbReference>
<dbReference type="InterPro" id="IPR036345">
    <property type="entry name" value="ExoRNase_PH_dom2_sf"/>
</dbReference>
<dbReference type="InterPro" id="IPR004087">
    <property type="entry name" value="KH_dom"/>
</dbReference>
<dbReference type="InterPro" id="IPR004088">
    <property type="entry name" value="KH_dom_type_1"/>
</dbReference>
<dbReference type="InterPro" id="IPR036612">
    <property type="entry name" value="KH_dom_type_1_sf"/>
</dbReference>
<dbReference type="InterPro" id="IPR012340">
    <property type="entry name" value="NA-bd_OB-fold"/>
</dbReference>
<dbReference type="InterPro" id="IPR012162">
    <property type="entry name" value="PNPase"/>
</dbReference>
<dbReference type="InterPro" id="IPR027408">
    <property type="entry name" value="PNPase/RNase_PH_dom_sf"/>
</dbReference>
<dbReference type="InterPro" id="IPR015848">
    <property type="entry name" value="PNPase_PH_RNA-bd_bac/org-type"/>
</dbReference>
<dbReference type="InterPro" id="IPR020568">
    <property type="entry name" value="Ribosomal_Su5_D2-typ_SF"/>
</dbReference>
<dbReference type="InterPro" id="IPR003029">
    <property type="entry name" value="S1_domain"/>
</dbReference>
<dbReference type="NCBIfam" id="TIGR03591">
    <property type="entry name" value="polynuc_phos"/>
    <property type="match status" value="1"/>
</dbReference>
<dbReference type="NCBIfam" id="NF008805">
    <property type="entry name" value="PRK11824.1"/>
    <property type="match status" value="1"/>
</dbReference>
<dbReference type="PANTHER" id="PTHR11252">
    <property type="entry name" value="POLYRIBONUCLEOTIDE NUCLEOTIDYLTRANSFERASE"/>
    <property type="match status" value="1"/>
</dbReference>
<dbReference type="PANTHER" id="PTHR11252:SF0">
    <property type="entry name" value="POLYRIBONUCLEOTIDE NUCLEOTIDYLTRANSFERASE 1, MITOCHONDRIAL"/>
    <property type="match status" value="1"/>
</dbReference>
<dbReference type="Pfam" id="PF00013">
    <property type="entry name" value="KH_1"/>
    <property type="match status" value="1"/>
</dbReference>
<dbReference type="Pfam" id="PF03726">
    <property type="entry name" value="PNPase"/>
    <property type="match status" value="1"/>
</dbReference>
<dbReference type="Pfam" id="PF01138">
    <property type="entry name" value="RNase_PH"/>
    <property type="match status" value="2"/>
</dbReference>
<dbReference type="Pfam" id="PF03725">
    <property type="entry name" value="RNase_PH_C"/>
    <property type="match status" value="2"/>
</dbReference>
<dbReference type="Pfam" id="PF00575">
    <property type="entry name" value="S1"/>
    <property type="match status" value="1"/>
</dbReference>
<dbReference type="PIRSF" id="PIRSF005499">
    <property type="entry name" value="PNPase"/>
    <property type="match status" value="1"/>
</dbReference>
<dbReference type="SMART" id="SM00322">
    <property type="entry name" value="KH"/>
    <property type="match status" value="1"/>
</dbReference>
<dbReference type="SMART" id="SM00316">
    <property type="entry name" value="S1"/>
    <property type="match status" value="1"/>
</dbReference>
<dbReference type="SUPFAM" id="SSF54791">
    <property type="entry name" value="Eukaryotic type KH-domain (KH-domain type I)"/>
    <property type="match status" value="1"/>
</dbReference>
<dbReference type="SUPFAM" id="SSF50249">
    <property type="entry name" value="Nucleic acid-binding proteins"/>
    <property type="match status" value="1"/>
</dbReference>
<dbReference type="SUPFAM" id="SSF55666">
    <property type="entry name" value="Ribonuclease PH domain 2-like"/>
    <property type="match status" value="2"/>
</dbReference>
<dbReference type="SUPFAM" id="SSF54211">
    <property type="entry name" value="Ribosomal protein S5 domain 2-like"/>
    <property type="match status" value="2"/>
</dbReference>
<dbReference type="PROSITE" id="PS50084">
    <property type="entry name" value="KH_TYPE_1"/>
    <property type="match status" value="1"/>
</dbReference>
<dbReference type="PROSITE" id="PS50126">
    <property type="entry name" value="S1"/>
    <property type="match status" value="1"/>
</dbReference>
<feature type="chain" id="PRO_0000329695" description="Polyribonucleotide nucleotidyltransferase">
    <location>
        <begin position="1"/>
        <end position="729"/>
    </location>
</feature>
<feature type="domain" description="KH" evidence="1">
    <location>
        <begin position="552"/>
        <end position="611"/>
    </location>
</feature>
<feature type="domain" description="S1 motif" evidence="1">
    <location>
        <begin position="621"/>
        <end position="689"/>
    </location>
</feature>
<feature type="binding site" evidence="1">
    <location>
        <position position="485"/>
    </location>
    <ligand>
        <name>Mg(2+)</name>
        <dbReference type="ChEBI" id="CHEBI:18420"/>
    </ligand>
</feature>
<feature type="binding site" evidence="1">
    <location>
        <position position="491"/>
    </location>
    <ligand>
        <name>Mg(2+)</name>
        <dbReference type="ChEBI" id="CHEBI:18420"/>
    </ligand>
</feature>
<reference key="1">
    <citation type="journal article" date="2004" name="Science">
        <title>The genomic sequence of the accidental pathogen Legionella pneumophila.</title>
        <authorList>
            <person name="Chien M."/>
            <person name="Morozova I."/>
            <person name="Shi S."/>
            <person name="Sheng H."/>
            <person name="Chen J."/>
            <person name="Gomez S.M."/>
            <person name="Asamani G."/>
            <person name="Hill K."/>
            <person name="Nuara J."/>
            <person name="Feder M."/>
            <person name="Rineer J."/>
            <person name="Greenberg J.J."/>
            <person name="Steshenko V."/>
            <person name="Park S.H."/>
            <person name="Zhao B."/>
            <person name="Teplitskaya E."/>
            <person name="Edwards J.R."/>
            <person name="Pampou S."/>
            <person name="Georghiou A."/>
            <person name="Chou I.-C."/>
            <person name="Iannuccilli W."/>
            <person name="Ulz M.E."/>
            <person name="Kim D.H."/>
            <person name="Geringer-Sameth A."/>
            <person name="Goldsberry C."/>
            <person name="Morozov P."/>
            <person name="Fischer S.G."/>
            <person name="Segal G."/>
            <person name="Qu X."/>
            <person name="Rzhetsky A."/>
            <person name="Zhang P."/>
            <person name="Cayanis E."/>
            <person name="De Jong P.J."/>
            <person name="Ju J."/>
            <person name="Kalachikov S."/>
            <person name="Shuman H.A."/>
            <person name="Russo J.J."/>
        </authorList>
    </citation>
    <scope>NUCLEOTIDE SEQUENCE [LARGE SCALE GENOMIC DNA]</scope>
    <source>
        <strain>Philadelphia 1 / ATCC 33152 / DSM 7513</strain>
    </source>
</reference>
<proteinExistence type="inferred from homology"/>
<comment type="function">
    <text evidence="1">Involved in mRNA degradation. Catalyzes the phosphorolysis of single-stranded polyribonucleotides processively in the 3'- to 5'-direction.</text>
</comment>
<comment type="catalytic activity">
    <reaction evidence="1">
        <text>RNA(n+1) + phosphate = RNA(n) + a ribonucleoside 5'-diphosphate</text>
        <dbReference type="Rhea" id="RHEA:22096"/>
        <dbReference type="Rhea" id="RHEA-COMP:14527"/>
        <dbReference type="Rhea" id="RHEA-COMP:17342"/>
        <dbReference type="ChEBI" id="CHEBI:43474"/>
        <dbReference type="ChEBI" id="CHEBI:57930"/>
        <dbReference type="ChEBI" id="CHEBI:140395"/>
        <dbReference type="EC" id="2.7.7.8"/>
    </reaction>
</comment>
<comment type="cofactor">
    <cofactor evidence="1">
        <name>Mg(2+)</name>
        <dbReference type="ChEBI" id="CHEBI:18420"/>
    </cofactor>
</comment>
<comment type="subunit">
    <text evidence="1">Component of the RNA degradosome, which is a multiprotein complex involved in RNA processing and mRNA degradation.</text>
</comment>
<comment type="subcellular location">
    <subcellularLocation>
        <location evidence="1">Cytoplasm</location>
    </subcellularLocation>
</comment>
<comment type="similarity">
    <text evidence="1">Belongs to the polyribonucleotide nucleotidyltransferase family.</text>
</comment>
<sequence length="729" mass="80107">MAKITKEIVFGNHKLILETGEVARQADGAVMASMNGTQVLVTVVWKKDGGESNDFFPLTVNYQEKFYAIGKIPGGFNKREGRPSDNETLISRLIDRPIRPLFPDNFFNEVQIIATVLSLNPEVSPDIIAMIGASAALSISGVPFNGPIGAARVGYKDGVYLLNPSRKEQEESKLDLVIAGTKDAILMVESEAQELSEDIMRGAMLYGHEMMKNVIKSIEELARDVGKSKPEWKAPEIDTVLKARINDVARNEVEAAYLIKDKQQRYQRLDELREQTISALLAENDELNADVIANMFGELERSIVRNRILDGEPRIDGRDHRTVRPISIRTKFLERTHGSCLFTRGETQAIVVATLGNERDAQILDGISGESRDRFMLHYNFPPYSVGETGQVGSPKRREIGHGRLAKRALMAVLPDANEFPYVLRIVSEITESNGSSSMATVCGTSLALMDAGVPLKAPVAGVAMGLIKEGDRYAVLTDILGDEDHLGDMDFKVAGTEKGITALQMDIKISGITNEIMEQALEQALEGRTHILGVMNNALAEHRTELSQHAPRITTMKVAEDKIRTIIGKGGATIKGLIESTGVSIDIDDSGVVQLFSPDKMALEEAQKQIKALIAEIEVGQTYQGKVSKIVDFGAFINLLPGKDGLLHISQICADRTQKVEEVLQEGQEIEVFVAGIDKQGRVKLEWKDKPQAEAKEVEDAPVSATFLTMEEQSEEINSGNKISEEEE</sequence>